<evidence type="ECO:0000250" key="1"/>
<evidence type="ECO:0000255" key="2">
    <source>
        <dbReference type="HAMAP-Rule" id="MF_00223"/>
    </source>
</evidence>
<comment type="catalytic activity">
    <reaction evidence="2">
        <text>GTP + H2O = 7,8-dihydroneopterin 3'-triphosphate + formate + H(+)</text>
        <dbReference type="Rhea" id="RHEA:17473"/>
        <dbReference type="ChEBI" id="CHEBI:15377"/>
        <dbReference type="ChEBI" id="CHEBI:15378"/>
        <dbReference type="ChEBI" id="CHEBI:15740"/>
        <dbReference type="ChEBI" id="CHEBI:37565"/>
        <dbReference type="ChEBI" id="CHEBI:58462"/>
        <dbReference type="EC" id="3.5.4.16"/>
    </reaction>
</comment>
<comment type="pathway">
    <text evidence="2">Cofactor biosynthesis; 7,8-dihydroneopterin triphosphate biosynthesis; 7,8-dihydroneopterin triphosphate from GTP: step 1/1.</text>
</comment>
<comment type="subunit">
    <text evidence="1">Toroid-shaped homodecamer, composed of two pentamers of five dimers.</text>
</comment>
<comment type="similarity">
    <text evidence="2">Belongs to the GTP cyclohydrolase I family.</text>
</comment>
<sequence length="222" mass="24831">MPSLSKEAALVHEALVARGLETPLRPPVHEMDNETRKSLIAGHMTEIMQLLNLDLADDSLMETPHRIAKMYVDEIFSGLDYANFPKITLIENKMKVDEMVTVRDITLTSTCEHHFVTIDGKATVAYIPKDSVIGLSKINRIVQFFAQRPQVQERLTQQILIALQTLLGTNNVAVSIDAVHYCVKARGIRDATSATTTTSLGGLFKSSQNTRHEFLRAVRHHN</sequence>
<dbReference type="EC" id="3.5.4.16" evidence="2"/>
<dbReference type="EMBL" id="CP000247">
    <property type="protein sequence ID" value="ABG70192.1"/>
    <property type="molecule type" value="Genomic_DNA"/>
</dbReference>
<dbReference type="RefSeq" id="WP_001139613.1">
    <property type="nucleotide sequence ID" value="NC_008253.1"/>
</dbReference>
<dbReference type="SMR" id="Q0TFT7"/>
<dbReference type="GeneID" id="93775029"/>
<dbReference type="KEGG" id="ecp:ECP_2193"/>
<dbReference type="HOGENOM" id="CLU_049768_3_2_6"/>
<dbReference type="UniPathway" id="UPA00848">
    <property type="reaction ID" value="UER00151"/>
</dbReference>
<dbReference type="Proteomes" id="UP000009182">
    <property type="component" value="Chromosome"/>
</dbReference>
<dbReference type="GO" id="GO:0005737">
    <property type="term" value="C:cytoplasm"/>
    <property type="evidence" value="ECO:0007669"/>
    <property type="project" value="TreeGrafter"/>
</dbReference>
<dbReference type="GO" id="GO:0005525">
    <property type="term" value="F:GTP binding"/>
    <property type="evidence" value="ECO:0007669"/>
    <property type="project" value="UniProtKB-KW"/>
</dbReference>
<dbReference type="GO" id="GO:0003934">
    <property type="term" value="F:GTP cyclohydrolase I activity"/>
    <property type="evidence" value="ECO:0007669"/>
    <property type="project" value="UniProtKB-UniRule"/>
</dbReference>
<dbReference type="GO" id="GO:0008270">
    <property type="term" value="F:zinc ion binding"/>
    <property type="evidence" value="ECO:0007669"/>
    <property type="project" value="UniProtKB-UniRule"/>
</dbReference>
<dbReference type="GO" id="GO:0006730">
    <property type="term" value="P:one-carbon metabolic process"/>
    <property type="evidence" value="ECO:0007669"/>
    <property type="project" value="UniProtKB-UniRule"/>
</dbReference>
<dbReference type="GO" id="GO:0006729">
    <property type="term" value="P:tetrahydrobiopterin biosynthetic process"/>
    <property type="evidence" value="ECO:0007669"/>
    <property type="project" value="TreeGrafter"/>
</dbReference>
<dbReference type="GO" id="GO:0046654">
    <property type="term" value="P:tetrahydrofolate biosynthetic process"/>
    <property type="evidence" value="ECO:0007669"/>
    <property type="project" value="UniProtKB-UniRule"/>
</dbReference>
<dbReference type="CDD" id="cd00642">
    <property type="entry name" value="GTP_cyclohydro1"/>
    <property type="match status" value="1"/>
</dbReference>
<dbReference type="FunFam" id="1.10.286.10:FF:000002">
    <property type="entry name" value="GTP cyclohydrolase 1"/>
    <property type="match status" value="1"/>
</dbReference>
<dbReference type="FunFam" id="3.30.1130.10:FF:000001">
    <property type="entry name" value="GTP cyclohydrolase 1"/>
    <property type="match status" value="1"/>
</dbReference>
<dbReference type="Gene3D" id="1.10.286.10">
    <property type="match status" value="1"/>
</dbReference>
<dbReference type="Gene3D" id="3.30.1130.10">
    <property type="match status" value="1"/>
</dbReference>
<dbReference type="HAMAP" id="MF_00223">
    <property type="entry name" value="FolE"/>
    <property type="match status" value="1"/>
</dbReference>
<dbReference type="InterPro" id="IPR043133">
    <property type="entry name" value="GTP-CH-I_C/QueF"/>
</dbReference>
<dbReference type="InterPro" id="IPR043134">
    <property type="entry name" value="GTP-CH-I_N"/>
</dbReference>
<dbReference type="InterPro" id="IPR001474">
    <property type="entry name" value="GTP_CycHdrlase_I"/>
</dbReference>
<dbReference type="InterPro" id="IPR018234">
    <property type="entry name" value="GTP_CycHdrlase_I_CS"/>
</dbReference>
<dbReference type="InterPro" id="IPR020602">
    <property type="entry name" value="GTP_CycHdrlase_I_dom"/>
</dbReference>
<dbReference type="NCBIfam" id="TIGR00063">
    <property type="entry name" value="folE"/>
    <property type="match status" value="1"/>
</dbReference>
<dbReference type="NCBIfam" id="NF006824">
    <property type="entry name" value="PRK09347.1-1"/>
    <property type="match status" value="1"/>
</dbReference>
<dbReference type="NCBIfam" id="NF006826">
    <property type="entry name" value="PRK09347.1-3"/>
    <property type="match status" value="1"/>
</dbReference>
<dbReference type="PANTHER" id="PTHR11109:SF7">
    <property type="entry name" value="GTP CYCLOHYDROLASE 1"/>
    <property type="match status" value="1"/>
</dbReference>
<dbReference type="PANTHER" id="PTHR11109">
    <property type="entry name" value="GTP CYCLOHYDROLASE I"/>
    <property type="match status" value="1"/>
</dbReference>
<dbReference type="Pfam" id="PF01227">
    <property type="entry name" value="GTP_cyclohydroI"/>
    <property type="match status" value="1"/>
</dbReference>
<dbReference type="SUPFAM" id="SSF55620">
    <property type="entry name" value="Tetrahydrobiopterin biosynthesis enzymes-like"/>
    <property type="match status" value="1"/>
</dbReference>
<dbReference type="PROSITE" id="PS00859">
    <property type="entry name" value="GTP_CYCLOHYDROL_1_1"/>
    <property type="match status" value="1"/>
</dbReference>
<dbReference type="PROSITE" id="PS00860">
    <property type="entry name" value="GTP_CYCLOHYDROL_1_2"/>
    <property type="match status" value="1"/>
</dbReference>
<proteinExistence type="inferred from homology"/>
<protein>
    <recommendedName>
        <fullName evidence="2">GTP cyclohydrolase 1</fullName>
        <ecNumber evidence="2">3.5.4.16</ecNumber>
    </recommendedName>
    <alternativeName>
        <fullName evidence="2">GTP cyclohydrolase I</fullName>
        <shortName evidence="2">GTP-CH-I</shortName>
    </alternativeName>
</protein>
<keyword id="KW-0342">GTP-binding</keyword>
<keyword id="KW-0378">Hydrolase</keyword>
<keyword id="KW-0479">Metal-binding</keyword>
<keyword id="KW-0547">Nucleotide-binding</keyword>
<keyword id="KW-0554">One-carbon metabolism</keyword>
<keyword id="KW-0862">Zinc</keyword>
<gene>
    <name evidence="2" type="primary">folE</name>
    <name type="ordered locus">ECP_2193</name>
</gene>
<feature type="chain" id="PRO_1000043690" description="GTP cyclohydrolase 1">
    <location>
        <begin position="1"/>
        <end position="222"/>
    </location>
</feature>
<feature type="binding site" evidence="2">
    <location>
        <position position="111"/>
    </location>
    <ligand>
        <name>Zn(2+)</name>
        <dbReference type="ChEBI" id="CHEBI:29105"/>
    </ligand>
</feature>
<feature type="binding site" evidence="2">
    <location>
        <position position="114"/>
    </location>
    <ligand>
        <name>Zn(2+)</name>
        <dbReference type="ChEBI" id="CHEBI:29105"/>
    </ligand>
</feature>
<feature type="binding site" evidence="2">
    <location>
        <position position="182"/>
    </location>
    <ligand>
        <name>Zn(2+)</name>
        <dbReference type="ChEBI" id="CHEBI:29105"/>
    </ligand>
</feature>
<name>GCH1_ECOL5</name>
<reference key="1">
    <citation type="journal article" date="2006" name="Mol. Microbiol.">
        <title>Role of pathogenicity island-associated integrases in the genome plasticity of uropathogenic Escherichia coli strain 536.</title>
        <authorList>
            <person name="Hochhut B."/>
            <person name="Wilde C."/>
            <person name="Balling G."/>
            <person name="Middendorf B."/>
            <person name="Dobrindt U."/>
            <person name="Brzuszkiewicz E."/>
            <person name="Gottschalk G."/>
            <person name="Carniel E."/>
            <person name="Hacker J."/>
        </authorList>
    </citation>
    <scope>NUCLEOTIDE SEQUENCE [LARGE SCALE GENOMIC DNA]</scope>
    <source>
        <strain>536 / UPEC</strain>
    </source>
</reference>
<organism>
    <name type="scientific">Escherichia coli O6:K15:H31 (strain 536 / UPEC)</name>
    <dbReference type="NCBI Taxonomy" id="362663"/>
    <lineage>
        <taxon>Bacteria</taxon>
        <taxon>Pseudomonadati</taxon>
        <taxon>Pseudomonadota</taxon>
        <taxon>Gammaproteobacteria</taxon>
        <taxon>Enterobacterales</taxon>
        <taxon>Enterobacteriaceae</taxon>
        <taxon>Escherichia</taxon>
    </lineage>
</organism>
<accession>Q0TFT7</accession>